<proteinExistence type="inferred from homology"/>
<organism>
    <name type="scientific">Homo sapiens</name>
    <name type="common">Human</name>
    <dbReference type="NCBI Taxonomy" id="9606"/>
    <lineage>
        <taxon>Eukaryota</taxon>
        <taxon>Metazoa</taxon>
        <taxon>Chordata</taxon>
        <taxon>Craniata</taxon>
        <taxon>Vertebrata</taxon>
        <taxon>Euteleostomi</taxon>
        <taxon>Mammalia</taxon>
        <taxon>Eutheria</taxon>
        <taxon>Euarchontoglires</taxon>
        <taxon>Primates</taxon>
        <taxon>Haplorrhini</taxon>
        <taxon>Catarrhini</taxon>
        <taxon>Hominidae</taxon>
        <taxon>Homo</taxon>
    </lineage>
</organism>
<dbReference type="EMBL" id="AC136443">
    <property type="status" value="NOT_ANNOTATED_CDS"/>
    <property type="molecule type" value="Genomic_DNA"/>
</dbReference>
<dbReference type="CCDS" id="CCDS92115.1"/>
<dbReference type="RefSeq" id="NP_001382414.1">
    <property type="nucleotide sequence ID" value="NM_001395485.2"/>
</dbReference>
<dbReference type="RefSeq" id="NP_001382415.1">
    <property type="nucleotide sequence ID" value="NM_001395486.2"/>
</dbReference>
<dbReference type="RefSeq" id="XP_024306153.1">
    <property type="nucleotide sequence ID" value="XM_024450385.2"/>
</dbReference>
<dbReference type="RefSeq" id="XP_047290428.1">
    <property type="nucleotide sequence ID" value="XM_047434472.1"/>
</dbReference>
<dbReference type="SMR" id="E9PIF3"/>
<dbReference type="BioGRID" id="568253">
    <property type="interactions" value="1"/>
</dbReference>
<dbReference type="BioGRID" id="568266">
    <property type="interactions" value="2"/>
</dbReference>
<dbReference type="FunCoup" id="E9PIF3">
    <property type="interactions" value="39"/>
</dbReference>
<dbReference type="GlyGen" id="E9PIF3">
    <property type="glycosylation" value="1 site"/>
</dbReference>
<dbReference type="iPTMnet" id="E9PIF3"/>
<dbReference type="PhosphoSitePlus" id="E9PIF3"/>
<dbReference type="BioMuta" id="NPIPA2"/>
<dbReference type="jPOST" id="E9PIF3"/>
<dbReference type="MassIVE" id="E9PIF3"/>
<dbReference type="PeptideAtlas" id="E9PIF3"/>
<dbReference type="Ensembl" id="ENST00000529166.6">
    <property type="protein sequence ID" value="ENSP00000432029.1"/>
    <property type="gene ID" value="ENSG00000254852.9"/>
</dbReference>
<dbReference type="GeneID" id="642799"/>
<dbReference type="MANE-Select" id="ENST00000529166.6">
    <property type="protein sequence ID" value="ENSP00000432029.1"/>
    <property type="RefSeq nucleotide sequence ID" value="NM_001395485.2"/>
    <property type="RefSeq protein sequence ID" value="NP_001382414.1"/>
</dbReference>
<dbReference type="UCSC" id="uc059rbw.1">
    <property type="organism name" value="human"/>
</dbReference>
<dbReference type="AGR" id="HGNC:41979"/>
<dbReference type="GeneCards" id="NPIPA2"/>
<dbReference type="HGNC" id="HGNC:41979">
    <property type="gene designation" value="NPIPA2"/>
</dbReference>
<dbReference type="HPA" id="ENSG00000254852">
    <property type="expression patterns" value="Tissue enhanced (brain)"/>
</dbReference>
<dbReference type="neXtProt" id="NX_E9PIF3"/>
<dbReference type="VEuPathDB" id="HostDB:ENSG00000254852"/>
<dbReference type="GeneTree" id="ENSGT00540000072033"/>
<dbReference type="InParanoid" id="E9PIF3"/>
<dbReference type="OrthoDB" id="6614653at2759"/>
<dbReference type="PAN-GO" id="E9PIF3">
    <property type="GO annotations" value="1 GO annotation based on evolutionary models"/>
</dbReference>
<dbReference type="PhylomeDB" id="E9PIF3"/>
<dbReference type="TreeFam" id="TF333389"/>
<dbReference type="Pharos" id="E9PIF3">
    <property type="development level" value="Tdark"/>
</dbReference>
<dbReference type="PRO" id="PR:E9PIF3"/>
<dbReference type="Proteomes" id="UP000005640">
    <property type="component" value="Chromosome 16"/>
</dbReference>
<dbReference type="RNAct" id="E9PIF3">
    <property type="molecule type" value="protein"/>
</dbReference>
<dbReference type="Bgee" id="ENSG00000254852">
    <property type="expression patterns" value="Expressed in right hemisphere of cerebellum and 92 other cell types or tissues"/>
</dbReference>
<dbReference type="ExpressionAtlas" id="E9PIF3">
    <property type="expression patterns" value="baseline and differential"/>
</dbReference>
<dbReference type="InterPro" id="IPR009443">
    <property type="entry name" value="NPIP"/>
</dbReference>
<dbReference type="InterPro" id="IPR054697">
    <property type="entry name" value="NPIP_N"/>
</dbReference>
<dbReference type="PANTHER" id="PTHR15438">
    <property type="entry name" value="NUCLEAR PORE COMPLEX INTERACTING PROTEIN"/>
    <property type="match status" value="1"/>
</dbReference>
<dbReference type="PANTHER" id="PTHR15438:SF5">
    <property type="entry name" value="NUCLEAR PORE COMPLEX-INTERACTING PROTEIN FAMILY MEMBER A2-RELATED"/>
    <property type="match status" value="1"/>
</dbReference>
<dbReference type="Pfam" id="PF06409">
    <property type="entry name" value="NPIP"/>
    <property type="match status" value="1"/>
</dbReference>
<sequence>MVKLSIVLTPRFLSHDQGQLTKELQQHVKSVTCPCEYLRKVINTLADHRHRGTDFGGSPWLLIITVFLRSYKFAISLCTSYLCVSFLKTIFPSQNGHDGSTDVQQRARRSNRRRQEGIKIVLEDIFTLWRQVETKVRAKICKMKVTTKVNRHDKINGKRKTAKEHLRKLSMKEREHGEKERQVSEAEENGKLDMKEIHTYMEMFQRAQALRRRAEDYYRCKITPSARKPLCNRVRMAAAEHRHSSGLPYWPYLTAETLKNRMGHQPPPPTQQHSIIDNSLSLKTPPECLLTPLPPSALPSADDNLKTPAECLLYPLPPSADDNLKTPPECLLTPLPPSAPPSADDNLKTPPKCVCSLPFHPQRMIISRN</sequence>
<gene>
    <name type="primary">NPIPA2</name>
</gene>
<comment type="similarity">
    <text evidence="2">Belongs to the NPIP family.</text>
</comment>
<protein>
    <recommendedName>
        <fullName>Nuclear pore complex-interacting protein family member A2</fullName>
    </recommendedName>
</protein>
<keyword id="KW-1185">Reference proteome</keyword>
<evidence type="ECO:0000256" key="1">
    <source>
        <dbReference type="SAM" id="MobiDB-lite"/>
    </source>
</evidence>
<evidence type="ECO:0000305" key="2"/>
<feature type="chain" id="PRO_0000423916" description="Nuclear pore complex-interacting protein family member A2">
    <location>
        <begin position="1"/>
        <end position="369"/>
    </location>
</feature>
<feature type="region of interest" description="Disordered" evidence="1">
    <location>
        <begin position="325"/>
        <end position="346"/>
    </location>
</feature>
<accession>E9PIF3</accession>
<reference key="1">
    <citation type="journal article" date="2004" name="Nature">
        <title>The sequence and analysis of duplication-rich human chromosome 16.</title>
        <authorList>
            <person name="Martin J."/>
            <person name="Han C."/>
            <person name="Gordon L.A."/>
            <person name="Terry A."/>
            <person name="Prabhakar S."/>
            <person name="She X."/>
            <person name="Xie G."/>
            <person name="Hellsten U."/>
            <person name="Chan Y.M."/>
            <person name="Altherr M."/>
            <person name="Couronne O."/>
            <person name="Aerts A."/>
            <person name="Bajorek E."/>
            <person name="Black S."/>
            <person name="Blumer H."/>
            <person name="Branscomb E."/>
            <person name="Brown N.C."/>
            <person name="Bruno W.J."/>
            <person name="Buckingham J.M."/>
            <person name="Callen D.F."/>
            <person name="Campbell C.S."/>
            <person name="Campbell M.L."/>
            <person name="Campbell E.W."/>
            <person name="Caoile C."/>
            <person name="Challacombe J.F."/>
            <person name="Chasteen L.A."/>
            <person name="Chertkov O."/>
            <person name="Chi H.C."/>
            <person name="Christensen M."/>
            <person name="Clark L.M."/>
            <person name="Cohn J.D."/>
            <person name="Denys M."/>
            <person name="Detter J.C."/>
            <person name="Dickson M."/>
            <person name="Dimitrijevic-Bussod M."/>
            <person name="Escobar J."/>
            <person name="Fawcett J.J."/>
            <person name="Flowers D."/>
            <person name="Fotopulos D."/>
            <person name="Glavina T."/>
            <person name="Gomez M."/>
            <person name="Gonzales E."/>
            <person name="Goodstein D."/>
            <person name="Goodwin L.A."/>
            <person name="Grady D.L."/>
            <person name="Grigoriev I."/>
            <person name="Groza M."/>
            <person name="Hammon N."/>
            <person name="Hawkins T."/>
            <person name="Haydu L."/>
            <person name="Hildebrand C.E."/>
            <person name="Huang W."/>
            <person name="Israni S."/>
            <person name="Jett J."/>
            <person name="Jewett P.B."/>
            <person name="Kadner K."/>
            <person name="Kimball H."/>
            <person name="Kobayashi A."/>
            <person name="Krawczyk M.-C."/>
            <person name="Leyba T."/>
            <person name="Longmire J.L."/>
            <person name="Lopez F."/>
            <person name="Lou Y."/>
            <person name="Lowry S."/>
            <person name="Ludeman T."/>
            <person name="Manohar C.F."/>
            <person name="Mark G.A."/>
            <person name="McMurray K.L."/>
            <person name="Meincke L.J."/>
            <person name="Morgan J."/>
            <person name="Moyzis R.K."/>
            <person name="Mundt M.O."/>
            <person name="Munk A.C."/>
            <person name="Nandkeshwar R.D."/>
            <person name="Pitluck S."/>
            <person name="Pollard M."/>
            <person name="Predki P."/>
            <person name="Parson-Quintana B."/>
            <person name="Ramirez L."/>
            <person name="Rash S."/>
            <person name="Retterer J."/>
            <person name="Ricke D.O."/>
            <person name="Robinson D.L."/>
            <person name="Rodriguez A."/>
            <person name="Salamov A."/>
            <person name="Saunders E.H."/>
            <person name="Scott D."/>
            <person name="Shough T."/>
            <person name="Stallings R.L."/>
            <person name="Stalvey M."/>
            <person name="Sutherland R.D."/>
            <person name="Tapia R."/>
            <person name="Tesmer J.G."/>
            <person name="Thayer N."/>
            <person name="Thompson L.S."/>
            <person name="Tice H."/>
            <person name="Torney D.C."/>
            <person name="Tran-Gyamfi M."/>
            <person name="Tsai M."/>
            <person name="Ulanovsky L.E."/>
            <person name="Ustaszewska A."/>
            <person name="Vo N."/>
            <person name="White P.S."/>
            <person name="Williams A.L."/>
            <person name="Wills P.L."/>
            <person name="Wu J.-R."/>
            <person name="Wu K."/>
            <person name="Yang J."/>
            <person name="DeJong P."/>
            <person name="Bruce D."/>
            <person name="Doggett N.A."/>
            <person name="Deaven L."/>
            <person name="Schmutz J."/>
            <person name="Grimwood J."/>
            <person name="Richardson P."/>
            <person name="Rokhsar D.S."/>
            <person name="Eichler E.E."/>
            <person name="Gilna P."/>
            <person name="Lucas S.M."/>
            <person name="Myers R.M."/>
            <person name="Rubin E.M."/>
            <person name="Pennacchio L.A."/>
        </authorList>
    </citation>
    <scope>NUCLEOTIDE SEQUENCE [LARGE SCALE GENOMIC DNA]</scope>
</reference>
<name>NPIA2_HUMAN</name>